<dbReference type="EC" id="2.7.1.167" evidence="1"/>
<dbReference type="EC" id="2.7.7.70" evidence="1"/>
<dbReference type="EMBL" id="CP000301">
    <property type="protein sequence ID" value="ABD86994.1"/>
    <property type="molecule type" value="Genomic_DNA"/>
</dbReference>
<dbReference type="SMR" id="Q219E2"/>
<dbReference type="STRING" id="316056.RPC_1432"/>
<dbReference type="KEGG" id="rpc:RPC_1432"/>
<dbReference type="eggNOG" id="COG0615">
    <property type="taxonomic scope" value="Bacteria"/>
</dbReference>
<dbReference type="eggNOG" id="COG2870">
    <property type="taxonomic scope" value="Bacteria"/>
</dbReference>
<dbReference type="HOGENOM" id="CLU_021150_2_1_5"/>
<dbReference type="OrthoDB" id="9802794at2"/>
<dbReference type="UniPathway" id="UPA00356">
    <property type="reaction ID" value="UER00437"/>
</dbReference>
<dbReference type="UniPathway" id="UPA00356">
    <property type="reaction ID" value="UER00439"/>
</dbReference>
<dbReference type="GO" id="GO:0005829">
    <property type="term" value="C:cytosol"/>
    <property type="evidence" value="ECO:0007669"/>
    <property type="project" value="TreeGrafter"/>
</dbReference>
<dbReference type="GO" id="GO:0005524">
    <property type="term" value="F:ATP binding"/>
    <property type="evidence" value="ECO:0007669"/>
    <property type="project" value="UniProtKB-UniRule"/>
</dbReference>
<dbReference type="GO" id="GO:0033785">
    <property type="term" value="F:heptose 7-phosphate kinase activity"/>
    <property type="evidence" value="ECO:0007669"/>
    <property type="project" value="UniProtKB-UniRule"/>
</dbReference>
<dbReference type="GO" id="GO:0033786">
    <property type="term" value="F:heptose-1-phosphate adenylyltransferase activity"/>
    <property type="evidence" value="ECO:0007669"/>
    <property type="project" value="UniProtKB-UniRule"/>
</dbReference>
<dbReference type="GO" id="GO:0016773">
    <property type="term" value="F:phosphotransferase activity, alcohol group as acceptor"/>
    <property type="evidence" value="ECO:0007669"/>
    <property type="project" value="InterPro"/>
</dbReference>
<dbReference type="GO" id="GO:0097171">
    <property type="term" value="P:ADP-L-glycero-beta-D-manno-heptose biosynthetic process"/>
    <property type="evidence" value="ECO:0007669"/>
    <property type="project" value="UniProtKB-UniPathway"/>
</dbReference>
<dbReference type="CDD" id="cd01172">
    <property type="entry name" value="RfaE_like"/>
    <property type="match status" value="1"/>
</dbReference>
<dbReference type="Gene3D" id="3.40.1190.20">
    <property type="match status" value="1"/>
</dbReference>
<dbReference type="Gene3D" id="3.40.50.620">
    <property type="entry name" value="HUPs"/>
    <property type="match status" value="1"/>
</dbReference>
<dbReference type="HAMAP" id="MF_01603">
    <property type="entry name" value="HldE"/>
    <property type="match status" value="1"/>
</dbReference>
<dbReference type="InterPro" id="IPR023030">
    <property type="entry name" value="Bifunc_HldE"/>
</dbReference>
<dbReference type="InterPro" id="IPR002173">
    <property type="entry name" value="Carboh/pur_kinase_PfkB_CS"/>
</dbReference>
<dbReference type="InterPro" id="IPR004821">
    <property type="entry name" value="Cyt_trans-like"/>
</dbReference>
<dbReference type="InterPro" id="IPR011611">
    <property type="entry name" value="PfkB_dom"/>
</dbReference>
<dbReference type="InterPro" id="IPR011913">
    <property type="entry name" value="RfaE_dom_I"/>
</dbReference>
<dbReference type="InterPro" id="IPR011914">
    <property type="entry name" value="RfaE_dom_II"/>
</dbReference>
<dbReference type="InterPro" id="IPR029056">
    <property type="entry name" value="Ribokinase-like"/>
</dbReference>
<dbReference type="InterPro" id="IPR014729">
    <property type="entry name" value="Rossmann-like_a/b/a_fold"/>
</dbReference>
<dbReference type="NCBIfam" id="TIGR00125">
    <property type="entry name" value="cyt_tran_rel"/>
    <property type="match status" value="1"/>
</dbReference>
<dbReference type="NCBIfam" id="TIGR02198">
    <property type="entry name" value="rfaE_dom_I"/>
    <property type="match status" value="1"/>
</dbReference>
<dbReference type="NCBIfam" id="TIGR02199">
    <property type="entry name" value="rfaE_dom_II"/>
    <property type="match status" value="1"/>
</dbReference>
<dbReference type="PANTHER" id="PTHR46969">
    <property type="entry name" value="BIFUNCTIONAL PROTEIN HLDE"/>
    <property type="match status" value="1"/>
</dbReference>
<dbReference type="PANTHER" id="PTHR46969:SF1">
    <property type="entry name" value="BIFUNCTIONAL PROTEIN HLDE"/>
    <property type="match status" value="1"/>
</dbReference>
<dbReference type="Pfam" id="PF01467">
    <property type="entry name" value="CTP_transf_like"/>
    <property type="match status" value="1"/>
</dbReference>
<dbReference type="Pfam" id="PF00294">
    <property type="entry name" value="PfkB"/>
    <property type="match status" value="1"/>
</dbReference>
<dbReference type="SUPFAM" id="SSF52374">
    <property type="entry name" value="Nucleotidylyl transferase"/>
    <property type="match status" value="1"/>
</dbReference>
<dbReference type="SUPFAM" id="SSF53613">
    <property type="entry name" value="Ribokinase-like"/>
    <property type="match status" value="1"/>
</dbReference>
<dbReference type="PROSITE" id="PS00583">
    <property type="entry name" value="PFKB_KINASES_1"/>
    <property type="match status" value="1"/>
</dbReference>
<protein>
    <recommendedName>
        <fullName evidence="1">Bifunctional protein HldE</fullName>
    </recommendedName>
    <domain>
        <recommendedName>
            <fullName evidence="1">D-beta-D-heptose 7-phosphate kinase</fullName>
            <ecNumber evidence="1">2.7.1.167</ecNumber>
        </recommendedName>
        <alternativeName>
            <fullName evidence="1">D-beta-D-heptose 7-phosphotransferase</fullName>
        </alternativeName>
        <alternativeName>
            <fullName evidence="1">D-glycero-beta-D-manno-heptose-7-phosphate kinase</fullName>
        </alternativeName>
    </domain>
    <domain>
        <recommendedName>
            <fullName evidence="1">D-beta-D-heptose 1-phosphate adenylyltransferase</fullName>
            <ecNumber evidence="1">2.7.7.70</ecNumber>
        </recommendedName>
        <alternativeName>
            <fullName evidence="1">D-glycero-beta-D-manno-heptose 1-phosphate adenylyltransferase</fullName>
        </alternativeName>
    </domain>
</protein>
<name>HLDE_RHOPB</name>
<evidence type="ECO:0000255" key="1">
    <source>
        <dbReference type="HAMAP-Rule" id="MF_01603"/>
    </source>
</evidence>
<comment type="function">
    <text evidence="1">Catalyzes the phosphorylation of D-glycero-D-manno-heptose 7-phosphate at the C-1 position to selectively form D-glycero-beta-D-manno-heptose-1,7-bisphosphate.</text>
</comment>
<comment type="function">
    <text evidence="1">Catalyzes the ADP transfer from ATP to D-glycero-beta-D-manno-heptose 1-phosphate, yielding ADP-D-glycero-beta-D-manno-heptose.</text>
</comment>
<comment type="catalytic activity">
    <reaction evidence="1">
        <text>D-glycero-beta-D-manno-heptose 7-phosphate + ATP = D-glycero-beta-D-manno-heptose 1,7-bisphosphate + ADP + H(+)</text>
        <dbReference type="Rhea" id="RHEA:27473"/>
        <dbReference type="ChEBI" id="CHEBI:15378"/>
        <dbReference type="ChEBI" id="CHEBI:30616"/>
        <dbReference type="ChEBI" id="CHEBI:60204"/>
        <dbReference type="ChEBI" id="CHEBI:60208"/>
        <dbReference type="ChEBI" id="CHEBI:456216"/>
        <dbReference type="EC" id="2.7.1.167"/>
    </reaction>
</comment>
<comment type="catalytic activity">
    <reaction evidence="1">
        <text>D-glycero-beta-D-manno-heptose 1-phosphate + ATP + H(+) = ADP-D-glycero-beta-D-manno-heptose + diphosphate</text>
        <dbReference type="Rhea" id="RHEA:27465"/>
        <dbReference type="ChEBI" id="CHEBI:15378"/>
        <dbReference type="ChEBI" id="CHEBI:30616"/>
        <dbReference type="ChEBI" id="CHEBI:33019"/>
        <dbReference type="ChEBI" id="CHEBI:59967"/>
        <dbReference type="ChEBI" id="CHEBI:61593"/>
        <dbReference type="EC" id="2.7.7.70"/>
    </reaction>
</comment>
<comment type="pathway">
    <text evidence="1">Nucleotide-sugar biosynthesis; ADP-L-glycero-beta-D-manno-heptose biosynthesis; ADP-L-glycero-beta-D-manno-heptose from D-glycero-beta-D-manno-heptose 7-phosphate: step 1/4.</text>
</comment>
<comment type="pathway">
    <text evidence="1">Nucleotide-sugar biosynthesis; ADP-L-glycero-beta-D-manno-heptose biosynthesis; ADP-L-glycero-beta-D-manno-heptose from D-glycero-beta-D-manno-heptose 7-phosphate: step 3/4.</text>
</comment>
<comment type="subunit">
    <text evidence="1">Homodimer.</text>
</comment>
<comment type="similarity">
    <text evidence="1">In the N-terminal section; belongs to the carbohydrate kinase PfkB family.</text>
</comment>
<comment type="similarity">
    <text evidence="1">In the C-terminal section; belongs to the cytidylyltransferase family.</text>
</comment>
<keyword id="KW-0067">ATP-binding</keyword>
<keyword id="KW-0119">Carbohydrate metabolism</keyword>
<keyword id="KW-0418">Kinase</keyword>
<keyword id="KW-0511">Multifunctional enzyme</keyword>
<keyword id="KW-0547">Nucleotide-binding</keyword>
<keyword id="KW-0548">Nucleotidyltransferase</keyword>
<keyword id="KW-0808">Transferase</keyword>
<proteinExistence type="inferred from homology"/>
<sequence length="490" mass="51699">MLDFEAVLPAIGRQTVLCVGDLMLDEFVYGEVSRISPEAPAPVIAVQRSEINVGGAGNVARNIAALGARCIFVGLIGDDAAGRTLSAALAAEPLIEPVLVCDESRPTTRKVRFVSAHFSTHMLRADWEIAAPASLMVEQQLIDAILQQLPAADIVLLSDYAKGVLTARLIREVIDAARKLNKRVIVDPKSPNFALYRGATLLTPNRKEFAEATRSRADSQAEIAASAREAIAVADCEAILVTQSEQGMTLVPRDGEAIHVPAHPVKVRDVSGAGDTVAAVLAVMLAAGADWDVALRAANAGAAVAVSKNGTASVTLGELRRKVLPPASLAAEEKIVAAGGDLEPHLVEWRAEGLRIGFTNGCFDILHPGHVKVLTAARGACDRLIVGLNSDASVKRLKGESRPVQDERARAEVLAALEAVDLVVIFEEDTPLQLITRIVPSVLVKGGDYTREQVVGHEIVAAQGGEVVLVDILPGHSTTTLVARAQNGKA</sequence>
<organism>
    <name type="scientific">Rhodopseudomonas palustris (strain BisB18)</name>
    <dbReference type="NCBI Taxonomy" id="316056"/>
    <lineage>
        <taxon>Bacteria</taxon>
        <taxon>Pseudomonadati</taxon>
        <taxon>Pseudomonadota</taxon>
        <taxon>Alphaproteobacteria</taxon>
        <taxon>Hyphomicrobiales</taxon>
        <taxon>Nitrobacteraceae</taxon>
        <taxon>Rhodopseudomonas</taxon>
    </lineage>
</organism>
<gene>
    <name evidence="1" type="primary">hldE</name>
    <name type="ordered locus">RPC_1432</name>
</gene>
<reference key="1">
    <citation type="submission" date="2006-03" db="EMBL/GenBank/DDBJ databases">
        <title>Complete sequence of Rhodopseudomonas palustris BisB18.</title>
        <authorList>
            <consortium name="US DOE Joint Genome Institute"/>
            <person name="Copeland A."/>
            <person name="Lucas S."/>
            <person name="Lapidus A."/>
            <person name="Barry K."/>
            <person name="Detter J.C."/>
            <person name="Glavina del Rio T."/>
            <person name="Hammon N."/>
            <person name="Israni S."/>
            <person name="Dalin E."/>
            <person name="Tice H."/>
            <person name="Pitluck S."/>
            <person name="Chain P."/>
            <person name="Malfatti S."/>
            <person name="Shin M."/>
            <person name="Vergez L."/>
            <person name="Schmutz J."/>
            <person name="Larimer F."/>
            <person name="Land M."/>
            <person name="Hauser L."/>
            <person name="Pelletier D.A."/>
            <person name="Kyrpides N."/>
            <person name="Anderson I."/>
            <person name="Oda Y."/>
            <person name="Harwood C.S."/>
            <person name="Richardson P."/>
        </authorList>
    </citation>
    <scope>NUCLEOTIDE SEQUENCE [LARGE SCALE GENOMIC DNA]</scope>
    <source>
        <strain>BisB18</strain>
    </source>
</reference>
<accession>Q219E2</accession>
<feature type="chain" id="PRO_0000255777" description="Bifunctional protein HldE">
    <location>
        <begin position="1"/>
        <end position="490"/>
    </location>
</feature>
<feature type="region of interest" description="Ribokinase">
    <location>
        <begin position="1"/>
        <end position="330"/>
    </location>
</feature>
<feature type="region of interest" description="Cytidylyltransferase">
    <location>
        <begin position="358"/>
        <end position="490"/>
    </location>
</feature>
<feature type="active site" evidence="1">
    <location>
        <position position="275"/>
    </location>
</feature>
<feature type="binding site" evidence="1">
    <location>
        <begin position="205"/>
        <end position="208"/>
    </location>
    <ligand>
        <name>ATP</name>
        <dbReference type="ChEBI" id="CHEBI:30616"/>
    </ligand>
</feature>